<comment type="function">
    <text evidence="2 4">A probable toxin that has no activity on the tested mammalian voltage-gated potassium channels (when tested at 1 uM) and is not toxic to mice (PubMed:36364113). It resembles alpha toxins that block voltage-gated potassium channels (Probable).</text>
</comment>
<comment type="subcellular location">
    <subcellularLocation>
        <location evidence="2">Secreted</location>
    </subcellularLocation>
</comment>
<comment type="tissue specificity">
    <text evidence="5">Expressed by the venom gland.</text>
</comment>
<comment type="domain">
    <text evidence="5">Has the structural arrangement of an alpha-helix connected to antiparallel beta-sheets by disulfide bonds (CS-alpha/beta).</text>
</comment>
<comment type="mass spectrometry"/>
<comment type="miscellaneous">
    <text evidence="2">Negative results: no activity on the mammalian voltage-gated potassium channels Kv1.1/KCNA1, Kv1.2/KCNA2, Kv1.3/KCNA3, Kv1.4/KCNA4, Kv1.5/KCNA5 and Kv1.6/KCNA6. Is not toxic to mice when intracerebroventricular injected (when tested up to 37 ng/20 g).</text>
</comment>
<comment type="similarity">
    <text evidence="4">Belongs to the short scorpion toxin superfamily. Potassium channel inhibitor family.</text>
</comment>
<keyword id="KW-0903">Direct protein sequencing</keyword>
<keyword id="KW-1015">Disulfide bond</keyword>
<keyword id="KW-0872">Ion channel impairing toxin</keyword>
<keyword id="KW-0528">Neurotoxin</keyword>
<keyword id="KW-0632">Potassium channel impairing toxin</keyword>
<keyword id="KW-0964">Secreted</keyword>
<keyword id="KW-0800">Toxin</keyword>
<name>KAX_BUTOC</name>
<sequence>TNGVPGKCTKPGGCSTYCRDTTGTMGLCKNSKCYCNKY</sequence>
<evidence type="ECO:0000250" key="1">
    <source>
        <dbReference type="UniProtKB" id="P0DL65"/>
    </source>
</evidence>
<evidence type="ECO:0000269" key="2">
    <source>
    </source>
</evidence>
<evidence type="ECO:0000303" key="3">
    <source>
    </source>
</evidence>
<evidence type="ECO:0000305" key="4"/>
<evidence type="ECO:0000305" key="5">
    <source>
    </source>
</evidence>
<organism evidence="3">
    <name type="scientific">Buthus occitanus tunetanus</name>
    <name type="common">Common European scorpion</name>
    <name type="synonym">Buthus tunetanus</name>
    <dbReference type="NCBI Taxonomy" id="6871"/>
    <lineage>
        <taxon>Eukaryota</taxon>
        <taxon>Metazoa</taxon>
        <taxon>Ecdysozoa</taxon>
        <taxon>Arthropoda</taxon>
        <taxon>Chelicerata</taxon>
        <taxon>Arachnida</taxon>
        <taxon>Scorpiones</taxon>
        <taxon>Buthida</taxon>
        <taxon>Buthoidea</taxon>
        <taxon>Buthidae</taxon>
        <taxon>Buthus</taxon>
    </lineage>
</organism>
<dbReference type="SMR" id="C0HM60"/>
<dbReference type="GO" id="GO:0005576">
    <property type="term" value="C:extracellular region"/>
    <property type="evidence" value="ECO:0007669"/>
    <property type="project" value="UniProtKB-SubCell"/>
</dbReference>
<dbReference type="GO" id="GO:0015459">
    <property type="term" value="F:potassium channel regulator activity"/>
    <property type="evidence" value="ECO:0007669"/>
    <property type="project" value="UniProtKB-KW"/>
</dbReference>
<dbReference type="GO" id="GO:0090729">
    <property type="term" value="F:toxin activity"/>
    <property type="evidence" value="ECO:0007669"/>
    <property type="project" value="UniProtKB-KW"/>
</dbReference>
<dbReference type="InterPro" id="IPR036574">
    <property type="entry name" value="Scorpion_toxin-like_sf"/>
</dbReference>
<dbReference type="SUPFAM" id="SSF57095">
    <property type="entry name" value="Scorpion toxin-like"/>
    <property type="match status" value="1"/>
</dbReference>
<proteinExistence type="evidence at protein level"/>
<accession>C0HM60</accession>
<feature type="chain" id="PRO_0000457092" description="Toxin Bot33">
    <location>
        <begin position="1"/>
        <end position="38"/>
    </location>
</feature>
<feature type="disulfide bond" evidence="1">
    <location>
        <begin position="8"/>
        <end position="28"/>
    </location>
</feature>
<feature type="disulfide bond" evidence="1">
    <location>
        <begin position="14"/>
        <end position="33"/>
    </location>
</feature>
<feature type="disulfide bond" evidence="1">
    <location>
        <begin position="18"/>
        <end position="35"/>
    </location>
</feature>
<reference evidence="4" key="1">
    <citation type="journal article" date="2022" name="Molecules">
        <title>Purification and Characterization of Bot33: A Non-Toxic Peptide from the Venom of Buthus occitanus tunetanus Scorpion.</title>
        <authorList>
            <person name="ElFessi R."/>
            <person name="Khamessi O."/>
            <person name="Srairi-Abid N."/>
            <person name="Sabatier J.M."/>
            <person name="Tytgat J."/>
            <person name="Peigneur S."/>
            <person name="Kharrat R."/>
        </authorList>
    </citation>
    <scope>PROTEIN SEQUENCE</scope>
    <scope>FUNCTION</scope>
    <scope>SUBCELLULAR LOCATION</scope>
    <scope>TISSUE SPECIFICITY</scope>
    <scope>MASS SPECTROMETRY</scope>
    <scope>BIOASSAY</scope>
    <source>
        <tissue evidence="3">Venom</tissue>
    </source>
</reference>
<protein>
    <recommendedName>
        <fullName evidence="3">Toxin Bot33</fullName>
    </recommendedName>
    <alternativeName>
        <fullName evidence="4">Potassium channel toxin alpha-KTx</fullName>
    </alternativeName>
</protein>